<gene>
    <name evidence="1" type="primary">rpsZ</name>
    <name evidence="1" type="synonym">rpsN</name>
    <name type="ordered locus">Mflv_5034</name>
</gene>
<sequence>MAKKALVNKANKKPKFKVRGYTRCNRCGRPHAVFRKFGLCRICLREMAHAGELPGVQKSSW</sequence>
<organism>
    <name type="scientific">Mycolicibacterium gilvum (strain PYR-GCK)</name>
    <name type="common">Mycobacterium gilvum (strain PYR-GCK)</name>
    <dbReference type="NCBI Taxonomy" id="350054"/>
    <lineage>
        <taxon>Bacteria</taxon>
        <taxon>Bacillati</taxon>
        <taxon>Actinomycetota</taxon>
        <taxon>Actinomycetes</taxon>
        <taxon>Mycobacteriales</taxon>
        <taxon>Mycobacteriaceae</taxon>
        <taxon>Mycolicibacterium</taxon>
    </lineage>
</organism>
<dbReference type="EMBL" id="CP000656">
    <property type="protein sequence ID" value="ABP47500.1"/>
    <property type="molecule type" value="Genomic_DNA"/>
</dbReference>
<dbReference type="SMR" id="A4TEC4"/>
<dbReference type="STRING" id="350054.Mflv_5034"/>
<dbReference type="KEGG" id="mgi:Mflv_5034"/>
<dbReference type="eggNOG" id="COG0199">
    <property type="taxonomic scope" value="Bacteria"/>
</dbReference>
<dbReference type="HOGENOM" id="CLU_139869_3_0_11"/>
<dbReference type="OrthoDB" id="9810484at2"/>
<dbReference type="GO" id="GO:0005737">
    <property type="term" value="C:cytoplasm"/>
    <property type="evidence" value="ECO:0007669"/>
    <property type="project" value="UniProtKB-ARBA"/>
</dbReference>
<dbReference type="GO" id="GO:0015935">
    <property type="term" value="C:small ribosomal subunit"/>
    <property type="evidence" value="ECO:0007669"/>
    <property type="project" value="TreeGrafter"/>
</dbReference>
<dbReference type="GO" id="GO:0019843">
    <property type="term" value="F:rRNA binding"/>
    <property type="evidence" value="ECO:0007669"/>
    <property type="project" value="UniProtKB-UniRule"/>
</dbReference>
<dbReference type="GO" id="GO:0003735">
    <property type="term" value="F:structural constituent of ribosome"/>
    <property type="evidence" value="ECO:0007669"/>
    <property type="project" value="InterPro"/>
</dbReference>
<dbReference type="GO" id="GO:0008270">
    <property type="term" value="F:zinc ion binding"/>
    <property type="evidence" value="ECO:0007669"/>
    <property type="project" value="UniProtKB-UniRule"/>
</dbReference>
<dbReference type="GO" id="GO:0006412">
    <property type="term" value="P:translation"/>
    <property type="evidence" value="ECO:0007669"/>
    <property type="project" value="UniProtKB-UniRule"/>
</dbReference>
<dbReference type="FunFam" id="4.10.830.10:FF:000001">
    <property type="entry name" value="30S ribosomal protein S14 type Z"/>
    <property type="match status" value="1"/>
</dbReference>
<dbReference type="Gene3D" id="4.10.830.10">
    <property type="entry name" value="30s Ribosomal Protein S14, Chain N"/>
    <property type="match status" value="1"/>
</dbReference>
<dbReference type="HAMAP" id="MF_01364_B">
    <property type="entry name" value="Ribosomal_uS14_2_B"/>
    <property type="match status" value="1"/>
</dbReference>
<dbReference type="InterPro" id="IPR001209">
    <property type="entry name" value="Ribosomal_uS14"/>
</dbReference>
<dbReference type="InterPro" id="IPR023053">
    <property type="entry name" value="Ribosomal_uS14_bact"/>
</dbReference>
<dbReference type="InterPro" id="IPR018271">
    <property type="entry name" value="Ribosomal_uS14_CS"/>
</dbReference>
<dbReference type="InterPro" id="IPR043140">
    <property type="entry name" value="Ribosomal_uS14_sf"/>
</dbReference>
<dbReference type="NCBIfam" id="NF005974">
    <property type="entry name" value="PRK08061.1"/>
    <property type="match status" value="1"/>
</dbReference>
<dbReference type="PANTHER" id="PTHR19836">
    <property type="entry name" value="30S RIBOSOMAL PROTEIN S14"/>
    <property type="match status" value="1"/>
</dbReference>
<dbReference type="PANTHER" id="PTHR19836:SF19">
    <property type="entry name" value="SMALL RIBOSOMAL SUBUNIT PROTEIN US14M"/>
    <property type="match status" value="1"/>
</dbReference>
<dbReference type="Pfam" id="PF00253">
    <property type="entry name" value="Ribosomal_S14"/>
    <property type="match status" value="1"/>
</dbReference>
<dbReference type="SUPFAM" id="SSF57716">
    <property type="entry name" value="Glucocorticoid receptor-like (DNA-binding domain)"/>
    <property type="match status" value="1"/>
</dbReference>
<dbReference type="PROSITE" id="PS00527">
    <property type="entry name" value="RIBOSOMAL_S14"/>
    <property type="match status" value="1"/>
</dbReference>
<keyword id="KW-0479">Metal-binding</keyword>
<keyword id="KW-0687">Ribonucleoprotein</keyword>
<keyword id="KW-0689">Ribosomal protein</keyword>
<keyword id="KW-0694">RNA-binding</keyword>
<keyword id="KW-0699">rRNA-binding</keyword>
<keyword id="KW-0862">Zinc</keyword>
<reference key="1">
    <citation type="submission" date="2007-04" db="EMBL/GenBank/DDBJ databases">
        <title>Complete sequence of chromosome of Mycobacterium gilvum PYR-GCK.</title>
        <authorList>
            <consortium name="US DOE Joint Genome Institute"/>
            <person name="Copeland A."/>
            <person name="Lucas S."/>
            <person name="Lapidus A."/>
            <person name="Barry K."/>
            <person name="Detter J.C."/>
            <person name="Glavina del Rio T."/>
            <person name="Hammon N."/>
            <person name="Israni S."/>
            <person name="Dalin E."/>
            <person name="Tice H."/>
            <person name="Pitluck S."/>
            <person name="Chain P."/>
            <person name="Malfatti S."/>
            <person name="Shin M."/>
            <person name="Vergez L."/>
            <person name="Schmutz J."/>
            <person name="Larimer F."/>
            <person name="Land M."/>
            <person name="Hauser L."/>
            <person name="Kyrpides N."/>
            <person name="Mikhailova N."/>
            <person name="Miller C."/>
            <person name="Richardson P."/>
        </authorList>
    </citation>
    <scope>NUCLEOTIDE SEQUENCE [LARGE SCALE GENOMIC DNA]</scope>
    <source>
        <strain>PYR-GCK</strain>
    </source>
</reference>
<name>RS14Z_MYCGI</name>
<feature type="chain" id="PRO_1000087017" description="Small ribosomal subunit protein uS14B">
    <location>
        <begin position="1"/>
        <end position="61"/>
    </location>
</feature>
<feature type="binding site" evidence="1">
    <location>
        <position position="24"/>
    </location>
    <ligand>
        <name>Zn(2+)</name>
        <dbReference type="ChEBI" id="CHEBI:29105"/>
    </ligand>
</feature>
<feature type="binding site" evidence="1">
    <location>
        <position position="27"/>
    </location>
    <ligand>
        <name>Zn(2+)</name>
        <dbReference type="ChEBI" id="CHEBI:29105"/>
    </ligand>
</feature>
<feature type="binding site" evidence="1">
    <location>
        <position position="40"/>
    </location>
    <ligand>
        <name>Zn(2+)</name>
        <dbReference type="ChEBI" id="CHEBI:29105"/>
    </ligand>
</feature>
<feature type="binding site" evidence="1">
    <location>
        <position position="43"/>
    </location>
    <ligand>
        <name>Zn(2+)</name>
        <dbReference type="ChEBI" id="CHEBI:29105"/>
    </ligand>
</feature>
<protein>
    <recommendedName>
        <fullName evidence="1">Small ribosomal subunit protein uS14B</fullName>
    </recommendedName>
    <alternativeName>
        <fullName evidence="2">30S ribosomal protein S14 type Z</fullName>
    </alternativeName>
</protein>
<accession>A4TEC4</accession>
<proteinExistence type="inferred from homology"/>
<comment type="function">
    <text evidence="1">Binds 16S rRNA, required for the assembly of 30S particles and may also be responsible for determining the conformation of the 16S rRNA at the A site.</text>
</comment>
<comment type="cofactor">
    <cofactor evidence="1">
        <name>Zn(2+)</name>
        <dbReference type="ChEBI" id="CHEBI:29105"/>
    </cofactor>
    <text evidence="1">Binds 1 zinc ion per subunit.</text>
</comment>
<comment type="subunit">
    <text evidence="1">Part of the 30S ribosomal subunit. Contacts proteins S3 and S10.</text>
</comment>
<comment type="similarity">
    <text evidence="1">Belongs to the universal ribosomal protein uS14 family. Zinc-binding uS14 subfamily.</text>
</comment>
<evidence type="ECO:0000255" key="1">
    <source>
        <dbReference type="HAMAP-Rule" id="MF_01364"/>
    </source>
</evidence>
<evidence type="ECO:0000305" key="2"/>